<keyword id="KW-0131">Cell cycle</keyword>
<keyword id="KW-0132">Cell division</keyword>
<accession>Q7W4S7</accession>
<reference key="1">
    <citation type="journal article" date="2003" name="Nat. Genet.">
        <title>Comparative analysis of the genome sequences of Bordetella pertussis, Bordetella parapertussis and Bordetella bronchiseptica.</title>
        <authorList>
            <person name="Parkhill J."/>
            <person name="Sebaihia M."/>
            <person name="Preston A."/>
            <person name="Murphy L.D."/>
            <person name="Thomson N.R."/>
            <person name="Harris D.E."/>
            <person name="Holden M.T.G."/>
            <person name="Churcher C.M."/>
            <person name="Bentley S.D."/>
            <person name="Mungall K.L."/>
            <person name="Cerdeno-Tarraga A.-M."/>
            <person name="Temple L."/>
            <person name="James K.D."/>
            <person name="Harris B."/>
            <person name="Quail M.A."/>
            <person name="Achtman M."/>
            <person name="Atkin R."/>
            <person name="Baker S."/>
            <person name="Basham D."/>
            <person name="Bason N."/>
            <person name="Cherevach I."/>
            <person name="Chillingworth T."/>
            <person name="Collins M."/>
            <person name="Cronin A."/>
            <person name="Davis P."/>
            <person name="Doggett J."/>
            <person name="Feltwell T."/>
            <person name="Goble A."/>
            <person name="Hamlin N."/>
            <person name="Hauser H."/>
            <person name="Holroyd S."/>
            <person name="Jagels K."/>
            <person name="Leather S."/>
            <person name="Moule S."/>
            <person name="Norberczak H."/>
            <person name="O'Neil S."/>
            <person name="Ormond D."/>
            <person name="Price C."/>
            <person name="Rabbinowitsch E."/>
            <person name="Rutter S."/>
            <person name="Sanders M."/>
            <person name="Saunders D."/>
            <person name="Seeger K."/>
            <person name="Sharp S."/>
            <person name="Simmonds M."/>
            <person name="Skelton J."/>
            <person name="Squares R."/>
            <person name="Squares S."/>
            <person name="Stevens K."/>
            <person name="Unwin L."/>
            <person name="Whitehead S."/>
            <person name="Barrell B.G."/>
            <person name="Maskell D.J."/>
        </authorList>
    </citation>
    <scope>NUCLEOTIDE SEQUENCE [LARGE SCALE GENOMIC DNA]</scope>
    <source>
        <strain>12822 / ATCC BAA-587 / NCTC 13253</strain>
    </source>
</reference>
<name>MINE_BORPA</name>
<proteinExistence type="inferred from homology"/>
<protein>
    <recommendedName>
        <fullName evidence="1">Cell division topological specificity factor</fullName>
    </recommendedName>
</protein>
<sequence length="83" mass="9489">MSFLSFLLGQKKSSASVAKERLQIILAHERGRGDSPDYLPQLQQELVAVISKYVKIDPEDIKVHLERQDTLEVLEVKIEMPQN</sequence>
<comment type="function">
    <text evidence="1">Prevents the cell division inhibition by proteins MinC and MinD at internal division sites while permitting inhibition at polar sites. This ensures cell division at the proper site by restricting the formation of a division septum at the midpoint of the long axis of the cell.</text>
</comment>
<comment type="similarity">
    <text evidence="1">Belongs to the MinE family.</text>
</comment>
<dbReference type="EMBL" id="BX640434">
    <property type="protein sequence ID" value="CAE38865.1"/>
    <property type="molecule type" value="Genomic_DNA"/>
</dbReference>
<dbReference type="RefSeq" id="WP_003814252.1">
    <property type="nucleotide sequence ID" value="NC_002928.3"/>
</dbReference>
<dbReference type="SMR" id="Q7W4S7"/>
<dbReference type="GeneID" id="93205370"/>
<dbReference type="KEGG" id="bpa:BPP3581"/>
<dbReference type="HOGENOM" id="CLU_137929_2_1_4"/>
<dbReference type="Proteomes" id="UP000001421">
    <property type="component" value="Chromosome"/>
</dbReference>
<dbReference type="GO" id="GO:0051301">
    <property type="term" value="P:cell division"/>
    <property type="evidence" value="ECO:0007669"/>
    <property type="project" value="UniProtKB-KW"/>
</dbReference>
<dbReference type="GO" id="GO:0032955">
    <property type="term" value="P:regulation of division septum assembly"/>
    <property type="evidence" value="ECO:0007669"/>
    <property type="project" value="InterPro"/>
</dbReference>
<dbReference type="FunFam" id="3.30.1070.10:FF:000001">
    <property type="entry name" value="Cell division topological specificity factor"/>
    <property type="match status" value="1"/>
</dbReference>
<dbReference type="Gene3D" id="3.30.1070.10">
    <property type="entry name" value="Cell division topological specificity factor MinE"/>
    <property type="match status" value="1"/>
</dbReference>
<dbReference type="HAMAP" id="MF_00262">
    <property type="entry name" value="MinE"/>
    <property type="match status" value="1"/>
</dbReference>
<dbReference type="InterPro" id="IPR005527">
    <property type="entry name" value="MinE"/>
</dbReference>
<dbReference type="InterPro" id="IPR036707">
    <property type="entry name" value="MinE_sf"/>
</dbReference>
<dbReference type="NCBIfam" id="TIGR01215">
    <property type="entry name" value="minE"/>
    <property type="match status" value="1"/>
</dbReference>
<dbReference type="NCBIfam" id="NF001422">
    <property type="entry name" value="PRK00296.1"/>
    <property type="match status" value="1"/>
</dbReference>
<dbReference type="NCBIfam" id="NF010595">
    <property type="entry name" value="PRK13989.1"/>
    <property type="match status" value="1"/>
</dbReference>
<dbReference type="Pfam" id="PF03776">
    <property type="entry name" value="MinE"/>
    <property type="match status" value="1"/>
</dbReference>
<dbReference type="SUPFAM" id="SSF55229">
    <property type="entry name" value="Cell division protein MinE topological specificity domain"/>
    <property type="match status" value="1"/>
</dbReference>
<gene>
    <name evidence="1" type="primary">minE</name>
    <name type="ordered locus">BPP3581</name>
</gene>
<organism>
    <name type="scientific">Bordetella parapertussis (strain 12822 / ATCC BAA-587 / NCTC 13253)</name>
    <dbReference type="NCBI Taxonomy" id="257311"/>
    <lineage>
        <taxon>Bacteria</taxon>
        <taxon>Pseudomonadati</taxon>
        <taxon>Pseudomonadota</taxon>
        <taxon>Betaproteobacteria</taxon>
        <taxon>Burkholderiales</taxon>
        <taxon>Alcaligenaceae</taxon>
        <taxon>Bordetella</taxon>
    </lineage>
</organism>
<feature type="chain" id="PRO_0000298078" description="Cell division topological specificity factor">
    <location>
        <begin position="1"/>
        <end position="83"/>
    </location>
</feature>
<evidence type="ECO:0000255" key="1">
    <source>
        <dbReference type="HAMAP-Rule" id="MF_00262"/>
    </source>
</evidence>